<protein>
    <recommendedName>
        <fullName evidence="9">Boron transporter 1</fullName>
    </recommendedName>
</protein>
<feature type="chain" id="PRO_0000079237" description="Boron transporter 1">
    <location>
        <begin position="1"/>
        <end position="704"/>
    </location>
</feature>
<feature type="topological domain" description="Cytoplasmic" evidence="1">
    <location>
        <begin position="1"/>
        <end position="35"/>
    </location>
</feature>
<feature type="transmembrane region" description="Helical" evidence="1">
    <location>
        <begin position="36"/>
        <end position="56"/>
    </location>
</feature>
<feature type="topological domain" description="Extracellular" evidence="1">
    <location>
        <begin position="57"/>
        <end position="75"/>
    </location>
</feature>
<feature type="transmembrane region" description="Helical" evidence="1">
    <location>
        <begin position="76"/>
        <end position="96"/>
    </location>
</feature>
<feature type="topological domain" description="Cytoplasmic" evidence="1">
    <location>
        <begin position="97"/>
        <end position="120"/>
    </location>
</feature>
<feature type="transmembrane region" description="Helical" evidence="1">
    <location>
        <begin position="121"/>
        <end position="141"/>
    </location>
</feature>
<feature type="topological domain" description="Extracellular" evidence="1">
    <location>
        <begin position="142"/>
        <end position="155"/>
    </location>
</feature>
<feature type="transmembrane region" description="Helical" evidence="1">
    <location>
        <begin position="156"/>
        <end position="176"/>
    </location>
</feature>
<feature type="topological domain" description="Cytoplasmic" evidence="1">
    <location>
        <begin position="177"/>
        <end position="195"/>
    </location>
</feature>
<feature type="transmembrane region" description="Helical" evidence="1">
    <location>
        <begin position="196"/>
        <end position="216"/>
    </location>
</feature>
<feature type="topological domain" description="Extracellular" evidence="1">
    <location>
        <begin position="217"/>
        <end position="233"/>
    </location>
</feature>
<feature type="transmembrane region" description="Helical" evidence="1">
    <location>
        <begin position="234"/>
        <end position="254"/>
    </location>
</feature>
<feature type="topological domain" description="Cytoplasmic" evidence="1">
    <location>
        <begin position="255"/>
        <end position="289"/>
    </location>
</feature>
<feature type="transmembrane region" description="Helical" evidence="1">
    <location>
        <begin position="290"/>
        <end position="310"/>
    </location>
</feature>
<feature type="topological domain" description="Extracellular" evidence="1">
    <location>
        <begin position="311"/>
        <end position="337"/>
    </location>
</feature>
<feature type="transmembrane region" description="Helical" evidence="1">
    <location>
        <begin position="338"/>
        <end position="358"/>
    </location>
</feature>
<feature type="topological domain" description="Cytoplasmic" evidence="1">
    <location>
        <begin position="359"/>
        <end position="480"/>
    </location>
</feature>
<feature type="transmembrane region" description="Helical" evidence="1">
    <location>
        <begin position="481"/>
        <end position="501"/>
    </location>
</feature>
<feature type="topological domain" description="Extracellular" evidence="1">
    <location>
        <begin position="502"/>
        <end position="557"/>
    </location>
</feature>
<feature type="transmembrane region" description="Helical" evidence="1">
    <location>
        <begin position="558"/>
        <end position="578"/>
    </location>
</feature>
<feature type="topological domain" description="Cytoplasmic" evidence="1">
    <location>
        <begin position="579"/>
        <end position="704"/>
    </location>
</feature>
<feature type="region of interest" description="Disordered" evidence="2">
    <location>
        <begin position="641"/>
        <end position="704"/>
    </location>
</feature>
<feature type="compositionally biased region" description="Low complexity" evidence="2">
    <location>
        <begin position="647"/>
        <end position="664"/>
    </location>
</feature>
<feature type="mutagenesis site" description="In bor1-2; reduced boron uptake." evidence="3">
    <original>S</original>
    <variation>P</variation>
    <location>
        <position position="74"/>
    </location>
</feature>
<feature type="mutagenesis site" description="In bor1-1; reduced boron uptake." evidence="3">
    <original>G</original>
    <variation>E</variation>
    <location>
        <position position="86"/>
    </location>
</feature>
<feature type="mutagenesis site" description="Does not affect polar localization and vacuolar targeting." evidence="6">
    <original>Y</original>
    <variation>A</variation>
    <location>
        <position position="373"/>
    </location>
</feature>
<feature type="mutagenesis site" description="Affects polar localization and vacuolar targeting; when associated with A-405." evidence="6">
    <original>Y</original>
    <variation>A</variation>
    <location>
        <position position="398"/>
    </location>
</feature>
<feature type="mutagenesis site" description="Affects polar localization and vacuolar targeting; when associated with A-398." evidence="6">
    <original>Y</original>
    <variation>A</variation>
    <location>
        <position position="405"/>
    </location>
</feature>
<feature type="helix" evidence="13">
    <location>
        <begin position="9"/>
        <end position="19"/>
    </location>
</feature>
<feature type="helix" evidence="13">
    <location>
        <begin position="22"/>
        <end position="30"/>
    </location>
</feature>
<feature type="helix" evidence="13">
    <location>
        <begin position="31"/>
        <end position="36"/>
    </location>
</feature>
<feature type="helix" evidence="13">
    <location>
        <begin position="37"/>
        <end position="61"/>
    </location>
</feature>
<feature type="turn" evidence="13">
    <location>
        <begin position="62"/>
        <end position="64"/>
    </location>
</feature>
<feature type="helix" evidence="13">
    <location>
        <begin position="68"/>
        <end position="85"/>
    </location>
</feature>
<feature type="helix" evidence="13">
    <location>
        <begin position="97"/>
        <end position="111"/>
    </location>
</feature>
<feature type="turn" evidence="13">
    <location>
        <begin position="114"/>
        <end position="120"/>
    </location>
</feature>
<feature type="helix" evidence="13">
    <location>
        <begin position="121"/>
        <end position="141"/>
    </location>
</feature>
<feature type="helix" evidence="13">
    <location>
        <begin position="144"/>
        <end position="150"/>
    </location>
</feature>
<feature type="helix" evidence="13">
    <location>
        <begin position="153"/>
        <end position="177"/>
    </location>
</feature>
<feature type="strand" evidence="15">
    <location>
        <begin position="183"/>
        <end position="185"/>
    </location>
</feature>
<feature type="helix" evidence="13">
    <location>
        <begin position="190"/>
        <end position="192"/>
    </location>
</feature>
<feature type="helix" evidence="13">
    <location>
        <begin position="194"/>
        <end position="218"/>
    </location>
</feature>
<feature type="helix" evidence="13">
    <location>
        <begin position="219"/>
        <end position="223"/>
    </location>
</feature>
<feature type="strand" evidence="13">
    <location>
        <begin position="225"/>
        <end position="227"/>
    </location>
</feature>
<feature type="helix" evidence="13">
    <location>
        <begin position="229"/>
        <end position="251"/>
    </location>
</feature>
<feature type="helix" evidence="13">
    <location>
        <begin position="253"/>
        <end position="257"/>
    </location>
</feature>
<feature type="helix" evidence="13">
    <location>
        <begin position="283"/>
        <end position="286"/>
    </location>
</feature>
<feature type="helix" evidence="13">
    <location>
        <begin position="291"/>
        <end position="296"/>
    </location>
</feature>
<feature type="helix" evidence="13">
    <location>
        <begin position="298"/>
        <end position="319"/>
    </location>
</feature>
<feature type="helix" evidence="13">
    <location>
        <begin position="322"/>
        <end position="324"/>
    </location>
</feature>
<feature type="helix" evidence="13">
    <location>
        <begin position="332"/>
        <end position="349"/>
    </location>
</feature>
<feature type="helix" evidence="13">
    <location>
        <begin position="360"/>
        <end position="367"/>
    </location>
</feature>
<feature type="strand" evidence="13">
    <location>
        <begin position="369"/>
        <end position="371"/>
    </location>
</feature>
<feature type="strand" evidence="15">
    <location>
        <begin position="394"/>
        <end position="396"/>
    </location>
</feature>
<feature type="helix" evidence="15">
    <location>
        <begin position="397"/>
        <end position="408"/>
    </location>
</feature>
<feature type="helix" evidence="15">
    <location>
        <begin position="425"/>
        <end position="430"/>
    </location>
</feature>
<feature type="turn" evidence="15">
    <location>
        <begin position="443"/>
        <end position="445"/>
    </location>
</feature>
<feature type="helix" evidence="15">
    <location>
        <begin position="448"/>
        <end position="452"/>
    </location>
</feature>
<feature type="helix" evidence="15">
    <location>
        <begin position="453"/>
        <end position="455"/>
    </location>
</feature>
<feature type="strand" evidence="13">
    <location>
        <begin position="458"/>
        <end position="460"/>
    </location>
</feature>
<feature type="helix" evidence="13">
    <location>
        <begin position="465"/>
        <end position="479"/>
    </location>
</feature>
<feature type="helix" evidence="13">
    <location>
        <begin position="481"/>
        <end position="484"/>
    </location>
</feature>
<feature type="helix" evidence="13">
    <location>
        <begin position="489"/>
        <end position="502"/>
    </location>
</feature>
<feature type="strand" evidence="15">
    <location>
        <begin position="504"/>
        <end position="506"/>
    </location>
</feature>
<feature type="helix" evidence="13">
    <location>
        <begin position="508"/>
        <end position="516"/>
    </location>
</feature>
<feature type="helix" evidence="13">
    <location>
        <begin position="520"/>
        <end position="522"/>
    </location>
</feature>
<feature type="helix" evidence="13">
    <location>
        <begin position="523"/>
        <end position="527"/>
    </location>
</feature>
<feature type="helix" evidence="13">
    <location>
        <begin position="534"/>
        <end position="537"/>
    </location>
</feature>
<feature type="helix" evidence="13">
    <location>
        <begin position="540"/>
        <end position="560"/>
    </location>
</feature>
<feature type="helix" evidence="13">
    <location>
        <begin position="566"/>
        <end position="569"/>
    </location>
</feature>
<feature type="helix" evidence="13">
    <location>
        <begin position="570"/>
        <end position="583"/>
    </location>
</feature>
<feature type="helix" evidence="13">
    <location>
        <begin position="585"/>
        <end position="588"/>
    </location>
</feature>
<feature type="helix" evidence="13">
    <location>
        <begin position="592"/>
        <end position="597"/>
    </location>
</feature>
<feature type="strand" evidence="13">
    <location>
        <begin position="600"/>
        <end position="605"/>
    </location>
</feature>
<feature type="helix" evidence="13">
    <location>
        <begin position="610"/>
        <end position="613"/>
    </location>
</feature>
<feature type="strand" evidence="13">
    <location>
        <begin position="614"/>
        <end position="617"/>
    </location>
</feature>
<feature type="turn" evidence="14">
    <location>
        <begin position="618"/>
        <end position="621"/>
    </location>
</feature>
<feature type="turn" evidence="13">
    <location>
        <begin position="627"/>
        <end position="629"/>
    </location>
</feature>
<feature type="helix" evidence="13">
    <location>
        <begin position="631"/>
        <end position="634"/>
    </location>
</feature>
<feature type="turn" evidence="13">
    <location>
        <begin position="637"/>
        <end position="639"/>
    </location>
</feature>
<feature type="strand" evidence="13">
    <location>
        <begin position="642"/>
        <end position="644"/>
    </location>
</feature>
<evidence type="ECO:0000255" key="1"/>
<evidence type="ECO:0000256" key="2">
    <source>
        <dbReference type="SAM" id="MobiDB-lite"/>
    </source>
</evidence>
<evidence type="ECO:0000269" key="3">
    <source>
    </source>
</evidence>
<evidence type="ECO:0000269" key="4">
    <source>
    </source>
</evidence>
<evidence type="ECO:0000269" key="5">
    <source>
    </source>
</evidence>
<evidence type="ECO:0000269" key="6">
    <source>
    </source>
</evidence>
<evidence type="ECO:0000269" key="7">
    <source>
    </source>
</evidence>
<evidence type="ECO:0000269" key="8">
    <source>
    </source>
</evidence>
<evidence type="ECO:0000303" key="9">
    <source>
    </source>
</evidence>
<evidence type="ECO:0000305" key="10"/>
<evidence type="ECO:0000312" key="11">
    <source>
        <dbReference type="Araport" id="AT2G47160"/>
    </source>
</evidence>
<evidence type="ECO:0000312" key="12">
    <source>
        <dbReference type="EMBL" id="AAD26598.1"/>
    </source>
</evidence>
<evidence type="ECO:0007829" key="13">
    <source>
        <dbReference type="PDB" id="8TEG"/>
    </source>
</evidence>
<evidence type="ECO:0007829" key="14">
    <source>
        <dbReference type="PDB" id="8TEH"/>
    </source>
</evidence>
<evidence type="ECO:0007829" key="15">
    <source>
        <dbReference type="PDB" id="8TEJ"/>
    </source>
</evidence>
<proteinExistence type="evidence at protein level"/>
<comment type="function">
    <text evidence="3 5 7 8">Efflux-type boron (B) transporter for xylem loading, responsive of boron translocation from roots to shoots under boron limitation (PubMed:12447444, PubMed:16805739, PubMed:27449211, PubMed:9390427). Boron is essential for maintaining the integrity of plants cell walls (PubMed:16805739, PubMed:9390427).</text>
</comment>
<comment type="subcellular location">
    <subcellularLocation>
        <location evidence="3 7">Cell membrane</location>
        <topology evidence="1">Multi-pass membrane protein</topology>
    </subcellularLocation>
    <subcellularLocation>
        <location evidence="3 4 7">Endosome membrane</location>
        <topology evidence="1">Multi-pass membrane protein</topology>
    </subcellularLocation>
    <subcellularLocation>
        <location evidence="3 4 7">Vacuole membrane</location>
        <topology evidence="1">Multi-pass membrane protein</topology>
    </subcellularLocation>
    <text evidence="4 6 7">Transferred from the plasma membrane via the endosomes to the vacuole under high-concentration of boron in a DRP1A-dependent manner (PubMed:16103374, PubMed:20194745, PubMed:27449211). Localized to the polar inner/stele-side domain of the plasma membrane under low-boron conditions, this polar localization is established after cell division (PubMed:27449211). Co-localizes with DRP1A in the cell plate and the plasma membrane (PubMed:27449211). Under boron excess, BOR1 is transferred from the plasma membrane via the endosomes to the vacuole for degradation in a DRP1A-dependent manner (PubMed:16103374, PubMed:20194745, PubMed:27449211).</text>
</comment>
<comment type="alternative products">
    <event type="alternative splicing"/>
    <isoform>
        <id>Q8VYR7-1</id>
        <name>1</name>
        <sequence type="displayed"/>
    </isoform>
    <text>A number of isoforms are produced. According to EST sequences.</text>
</comment>
<comment type="tissue specificity">
    <text evidence="3 6 7">Expressed in proximal side of various root cells, notably in the columella, lateral root cap, epidermis and endodermis in tip and elongation zones of the root (PubMed:27449211). Also detected in the epidermis, cortex, endodermis, and stele cells of the root hair zone (PubMed:27449211). Observed in cotyledons and hypocotyls (PubMed:27449211).</text>
</comment>
<comment type="developmental stage">
    <text evidence="7">First observed in seedlings and in the primary root tip and mature portion of the root (PubMed:27449211). Expressed in the basal region of the hypocotyl, localized with inner/stele-side polarity in the endodermal cells (PubMed:27449211). In the tip of cotyledons, accumulates mostly in epidermal cells of the top side, with a polar localization toward the inner side of the cotyledon (PubMed:27449211). High levels in the transition and differentiation zones of roots, localized with stele-side polarity in the epidermal and endodermal cells (PubMed:27449211). In the root meristem zone, present in epiderm, endoderm, columella, parts of the lateral cap, quiescent center (QC), vascular initial and protovascular cells (PubMed:27449211). In the QC, vascular initial and protovascular cells, exhibits an apical polar localization (PubMed:27449211).</text>
</comment>
<comment type="similarity">
    <text evidence="10">Belongs to the anion exchanger (TC 2.A.31.3) family.</text>
</comment>
<comment type="sequence caution" evidence="10">
    <conflict type="erroneous gene model prediction">
        <sequence resource="EMBL-CDS" id="AAD26598"/>
    </conflict>
</comment>
<name>BOR1_ARATH</name>
<accession>Q8VYR7</accession>
<accession>Q9SHX0</accession>
<sequence length="704" mass="78605">MEETFVPFEGIKNDLKGRLMCYKQDWTGGFKAGFRILAPTTYIFFASAIPVISFGEQLERSTDGVLTAVQTLASTAICGMIHSIIGGQPLLILGVAEPTVIMYTFMFNFAKARPELGRDLFLAWSGWVCVWTALMLFVLAICGACSIINRFTRVAGELFGLLIAMLFMQQAIKGLVDEFRIPERENQKLKEFLPSWRFANGMFALVLSFGLLLTGLRSRKARSWRYGTGWLRSLIADYGVPLMVLVWTGVSYIPAGDVPKGIPRRLFSPNPWSPGAYGNWTVVKEMLDVPIVYIIGAFIPASMIAVLYYFDHSVASQLAQQKEFNLRKPSSYHYDLLLLGFLTLMCGLLGVPPSNGVIPQSPMHTKSLATLKYQLLRNRLVATARRSIKTNASLGQLYDNMQEAYHHMQTPLVYQQPQGLKELKESTIQATTFTGNLNAPVDETLFDIEKEIDDLLPVEVKEQRVSNLLQSTMVGGCVAAMPILKMIPTSVLWGYFAFMAIESLPGNQFWERILLLFTAPSRRFKVLEDYHATFVETVPFKTIAMFTLFQTTYLLICFGLTWIPIAGVMFPLMIMFLIPVRQYLLPRFFKGAHLQDLDAAEYEEAPALPFNLAAETEIGSTTSYPGDLEILDEVMTRSRGEFRHTSSPKVTSSSSTPVNNRSLSQVFSPRVSGIRLGQMSPRVVGNSPKPASCGRSPLNQSSSN</sequence>
<dbReference type="EMBL" id="AB073713">
    <property type="protein sequence ID" value="BAC20173.1"/>
    <property type="molecule type" value="mRNA"/>
</dbReference>
<dbReference type="EMBL" id="AC007236">
    <property type="protein sequence ID" value="AAD26598.1"/>
    <property type="status" value="ALT_SEQ"/>
    <property type="molecule type" value="Genomic_DNA"/>
</dbReference>
<dbReference type="EMBL" id="AC004411">
    <property type="protein sequence ID" value="AAD26598.1"/>
    <property type="status" value="JOINED"/>
    <property type="molecule type" value="Genomic_DNA"/>
</dbReference>
<dbReference type="EMBL" id="CP002685">
    <property type="protein sequence ID" value="AEC10808.1"/>
    <property type="molecule type" value="Genomic_DNA"/>
</dbReference>
<dbReference type="EMBL" id="AY070067">
    <property type="protein sequence ID" value="AAL49824.1"/>
    <property type="molecule type" value="mRNA"/>
</dbReference>
<dbReference type="EMBL" id="AY096436">
    <property type="protein sequence ID" value="AAM20076.1"/>
    <property type="molecule type" value="mRNA"/>
</dbReference>
<dbReference type="EMBL" id="BT000732">
    <property type="protein sequence ID" value="AAN31874.1"/>
    <property type="molecule type" value="mRNA"/>
</dbReference>
<dbReference type="PIR" id="G84911">
    <property type="entry name" value="G84911"/>
</dbReference>
<dbReference type="RefSeq" id="NP_850469.1">
    <molecule id="Q8VYR7-1"/>
    <property type="nucleotide sequence ID" value="NM_180138.3"/>
</dbReference>
<dbReference type="PDB" id="5L25">
    <property type="method" value="X-ray"/>
    <property type="resolution" value="4.11 A"/>
    <property type="chains" value="A=1-645"/>
</dbReference>
<dbReference type="PDB" id="8TEG">
    <property type="method" value="EM"/>
    <property type="resolution" value="2.15 A"/>
    <property type="chains" value="A/B=1-704"/>
</dbReference>
<dbReference type="PDB" id="8TEH">
    <property type="method" value="EM"/>
    <property type="resolution" value="2.30 A"/>
    <property type="chains" value="A/B=1-704"/>
</dbReference>
<dbReference type="PDB" id="8TEI">
    <property type="method" value="EM"/>
    <property type="resolution" value="2.58 A"/>
    <property type="chains" value="A/B=1-704"/>
</dbReference>
<dbReference type="PDB" id="8TEJ">
    <property type="method" value="EM"/>
    <property type="resolution" value="2.55 A"/>
    <property type="chains" value="A=1-704"/>
</dbReference>
<dbReference type="PDB" id="8TEL">
    <property type="method" value="EM"/>
    <property type="resolution" value="2.77 A"/>
    <property type="chains" value="A/B=1-704"/>
</dbReference>
<dbReference type="PDB" id="8TEM">
    <property type="method" value="EM"/>
    <property type="resolution" value="3.02 A"/>
    <property type="chains" value="A/B=1-704"/>
</dbReference>
<dbReference type="PDB" id="8TEN">
    <property type="method" value="EM"/>
    <property type="resolution" value="2.98 A"/>
    <property type="chains" value="A/B=1-704"/>
</dbReference>
<dbReference type="PDBsum" id="5L25"/>
<dbReference type="PDBsum" id="8TEG"/>
<dbReference type="PDBsum" id="8TEH"/>
<dbReference type="PDBsum" id="8TEI"/>
<dbReference type="PDBsum" id="8TEJ"/>
<dbReference type="PDBsum" id="8TEL"/>
<dbReference type="PDBsum" id="8TEM"/>
<dbReference type="PDBsum" id="8TEN"/>
<dbReference type="EMDB" id="EMD-41185"/>
<dbReference type="EMDB" id="EMD-41186"/>
<dbReference type="EMDB" id="EMD-41187"/>
<dbReference type="EMDB" id="EMD-41188"/>
<dbReference type="EMDB" id="EMD-41190"/>
<dbReference type="EMDB" id="EMD-41191"/>
<dbReference type="EMDB" id="EMD-41192"/>
<dbReference type="SMR" id="Q8VYR7"/>
<dbReference type="BioGRID" id="4664">
    <property type="interactions" value="1"/>
</dbReference>
<dbReference type="FunCoup" id="Q8VYR7">
    <property type="interactions" value="775"/>
</dbReference>
<dbReference type="STRING" id="3702.Q8VYR7"/>
<dbReference type="TCDB" id="2.A.31.3.1">
    <property type="family name" value="the anion exchanger (ae) family"/>
</dbReference>
<dbReference type="iPTMnet" id="Q8VYR7"/>
<dbReference type="PaxDb" id="3702-AT2G47160.2"/>
<dbReference type="ProteomicsDB" id="240436">
    <molecule id="Q8VYR7-1"/>
</dbReference>
<dbReference type="EnsemblPlants" id="AT2G47160.1">
    <molecule id="Q8VYR7-1"/>
    <property type="protein sequence ID" value="AT2G47160.1"/>
    <property type="gene ID" value="AT2G47160"/>
</dbReference>
<dbReference type="GeneID" id="819329"/>
<dbReference type="Gramene" id="AT2G47160.1">
    <molecule id="Q8VYR7-1"/>
    <property type="protein sequence ID" value="AT2G47160.1"/>
    <property type="gene ID" value="AT2G47160"/>
</dbReference>
<dbReference type="KEGG" id="ath:AT2G47160"/>
<dbReference type="Araport" id="AT2G47160"/>
<dbReference type="TAIR" id="AT2G47160">
    <property type="gene designation" value="BOR1"/>
</dbReference>
<dbReference type="eggNOG" id="KOG1172">
    <property type="taxonomic scope" value="Eukaryota"/>
</dbReference>
<dbReference type="InParanoid" id="Q8VYR7"/>
<dbReference type="OrthoDB" id="1735926at2759"/>
<dbReference type="PhylomeDB" id="Q8VYR7"/>
<dbReference type="PRO" id="PR:Q8VYR7"/>
<dbReference type="Proteomes" id="UP000006548">
    <property type="component" value="Chromosome 2"/>
</dbReference>
<dbReference type="ExpressionAtlas" id="Q8VYR7">
    <property type="expression patterns" value="baseline and differential"/>
</dbReference>
<dbReference type="GO" id="GO:0010008">
    <property type="term" value="C:endosome membrane"/>
    <property type="evidence" value="ECO:0007669"/>
    <property type="project" value="UniProtKB-SubCell"/>
</dbReference>
<dbReference type="GO" id="GO:0005886">
    <property type="term" value="C:plasma membrane"/>
    <property type="evidence" value="ECO:0000314"/>
    <property type="project" value="UniProtKB"/>
</dbReference>
<dbReference type="GO" id="GO:0005774">
    <property type="term" value="C:vacuolar membrane"/>
    <property type="evidence" value="ECO:0007669"/>
    <property type="project" value="UniProtKB-SubCell"/>
</dbReference>
<dbReference type="GO" id="GO:0046715">
    <property type="term" value="F:active borate transmembrane transporter activity"/>
    <property type="evidence" value="ECO:0000315"/>
    <property type="project" value="UniProtKB"/>
</dbReference>
<dbReference type="GO" id="GO:0005452">
    <property type="term" value="F:solute:inorganic anion antiporter activity"/>
    <property type="evidence" value="ECO:0007669"/>
    <property type="project" value="InterPro"/>
</dbReference>
<dbReference type="GO" id="GO:0035445">
    <property type="term" value="P:borate transmembrane transport"/>
    <property type="evidence" value="ECO:0000315"/>
    <property type="project" value="UniProtKB"/>
</dbReference>
<dbReference type="GO" id="GO:0080029">
    <property type="term" value="P:cellular response to boron-containing substance levels"/>
    <property type="evidence" value="ECO:0000314"/>
    <property type="project" value="UniProtKB"/>
</dbReference>
<dbReference type="GO" id="GO:0006820">
    <property type="term" value="P:monoatomic anion transport"/>
    <property type="evidence" value="ECO:0007669"/>
    <property type="project" value="InterPro"/>
</dbReference>
<dbReference type="GO" id="GO:0010036">
    <property type="term" value="P:response to boron-containing substance"/>
    <property type="evidence" value="ECO:0000314"/>
    <property type="project" value="UniProtKB"/>
</dbReference>
<dbReference type="FunFam" id="1.10.287.570:FF:000004">
    <property type="entry name" value="probable boron transporter 2"/>
    <property type="match status" value="1"/>
</dbReference>
<dbReference type="Gene3D" id="1.10.287.570">
    <property type="entry name" value="Helical hairpin bin"/>
    <property type="match status" value="1"/>
</dbReference>
<dbReference type="InterPro" id="IPR011531">
    <property type="entry name" value="HCO3_transpt-like_TM_dom"/>
</dbReference>
<dbReference type="InterPro" id="IPR003020">
    <property type="entry name" value="HCO3_transpt_euk"/>
</dbReference>
<dbReference type="PANTHER" id="PTHR11453">
    <property type="entry name" value="ANION EXCHANGE PROTEIN"/>
    <property type="match status" value="1"/>
</dbReference>
<dbReference type="PANTHER" id="PTHR11453:SF130">
    <property type="entry name" value="BORON TRANSPORTER 1"/>
    <property type="match status" value="1"/>
</dbReference>
<dbReference type="Pfam" id="PF00955">
    <property type="entry name" value="HCO3_cotransp"/>
    <property type="match status" value="3"/>
</dbReference>
<gene>
    <name evidence="9" type="primary">BOR1</name>
    <name evidence="11" type="ordered locus">At2g47160</name>
    <name evidence="12" type="ORF">T3D7.3</name>
</gene>
<reference key="1">
    <citation type="journal article" date="2002" name="Nature">
        <title>Arabidopsis boron transporter for xylem loading.</title>
        <authorList>
            <person name="Takano J."/>
            <person name="Noguchi K."/>
            <person name="Yasumori M."/>
            <person name="Kobayashi M."/>
            <person name="Gajdos Z."/>
            <person name="Miwa K."/>
            <person name="Hayashi H."/>
            <person name="Yoneyama T."/>
            <person name="Fujiwara T."/>
        </authorList>
    </citation>
    <scope>NUCLEOTIDE SEQUENCE [MRNA]</scope>
    <scope>FUNCTION</scope>
    <scope>MUTAGENESIS OF SER-74 AND GLY-86</scope>
    <scope>SUBCELLULAR LOCATION</scope>
    <scope>TISSUE SPECIFICITY</scope>
    <scope>GENE FAMILY</scope>
    <source>
        <strain>cv. Columbia</strain>
    </source>
</reference>
<reference key="2">
    <citation type="journal article" date="1999" name="Nature">
        <title>Sequence and analysis of chromosome 2 of the plant Arabidopsis thaliana.</title>
        <authorList>
            <person name="Lin X."/>
            <person name="Kaul S."/>
            <person name="Rounsley S.D."/>
            <person name="Shea T.P."/>
            <person name="Benito M.-I."/>
            <person name="Town C.D."/>
            <person name="Fujii C.Y."/>
            <person name="Mason T.M."/>
            <person name="Bowman C.L."/>
            <person name="Barnstead M.E."/>
            <person name="Feldblyum T.V."/>
            <person name="Buell C.R."/>
            <person name="Ketchum K.A."/>
            <person name="Lee J.J."/>
            <person name="Ronning C.M."/>
            <person name="Koo H.L."/>
            <person name="Moffat K.S."/>
            <person name="Cronin L.A."/>
            <person name="Shen M."/>
            <person name="Pai G."/>
            <person name="Van Aken S."/>
            <person name="Umayam L."/>
            <person name="Tallon L.J."/>
            <person name="Gill J.E."/>
            <person name="Adams M.D."/>
            <person name="Carrera A.J."/>
            <person name="Creasy T.H."/>
            <person name="Goodman H.M."/>
            <person name="Somerville C.R."/>
            <person name="Copenhaver G.P."/>
            <person name="Preuss D."/>
            <person name="Nierman W.C."/>
            <person name="White O."/>
            <person name="Eisen J.A."/>
            <person name="Salzberg S.L."/>
            <person name="Fraser C.M."/>
            <person name="Venter J.C."/>
        </authorList>
    </citation>
    <scope>NUCLEOTIDE SEQUENCE [LARGE SCALE GENOMIC DNA]</scope>
    <source>
        <strain>cv. Columbia</strain>
    </source>
</reference>
<reference key="3">
    <citation type="journal article" date="2017" name="Plant J.">
        <title>Araport11: a complete reannotation of the Arabidopsis thaliana reference genome.</title>
        <authorList>
            <person name="Cheng C.Y."/>
            <person name="Krishnakumar V."/>
            <person name="Chan A.P."/>
            <person name="Thibaud-Nissen F."/>
            <person name="Schobel S."/>
            <person name="Town C.D."/>
        </authorList>
    </citation>
    <scope>GENOME REANNOTATION</scope>
    <source>
        <strain>cv. Columbia</strain>
    </source>
</reference>
<reference key="4">
    <citation type="journal article" date="2003" name="Science">
        <title>Empirical analysis of transcriptional activity in the Arabidopsis genome.</title>
        <authorList>
            <person name="Yamada K."/>
            <person name="Lim J."/>
            <person name="Dale J.M."/>
            <person name="Chen H."/>
            <person name="Shinn P."/>
            <person name="Palm C.J."/>
            <person name="Southwick A.M."/>
            <person name="Wu H.C."/>
            <person name="Kim C.J."/>
            <person name="Nguyen M."/>
            <person name="Pham P.K."/>
            <person name="Cheuk R.F."/>
            <person name="Karlin-Newmann G."/>
            <person name="Liu S.X."/>
            <person name="Lam B."/>
            <person name="Sakano H."/>
            <person name="Wu T."/>
            <person name="Yu G."/>
            <person name="Miranda M."/>
            <person name="Quach H.L."/>
            <person name="Tripp M."/>
            <person name="Chang C.H."/>
            <person name="Lee J.M."/>
            <person name="Toriumi M.J."/>
            <person name="Chan M.M."/>
            <person name="Tang C.C."/>
            <person name="Onodera C.S."/>
            <person name="Deng J.M."/>
            <person name="Akiyama K."/>
            <person name="Ansari Y."/>
            <person name="Arakawa T."/>
            <person name="Banh J."/>
            <person name="Banno F."/>
            <person name="Bowser L."/>
            <person name="Brooks S.Y."/>
            <person name="Carninci P."/>
            <person name="Chao Q."/>
            <person name="Choy N."/>
            <person name="Enju A."/>
            <person name="Goldsmith A.D."/>
            <person name="Gurjal M."/>
            <person name="Hansen N.F."/>
            <person name="Hayashizaki Y."/>
            <person name="Johnson-Hopson C."/>
            <person name="Hsuan V.W."/>
            <person name="Iida K."/>
            <person name="Karnes M."/>
            <person name="Khan S."/>
            <person name="Koesema E."/>
            <person name="Ishida J."/>
            <person name="Jiang P.X."/>
            <person name="Jones T."/>
            <person name="Kawai J."/>
            <person name="Kamiya A."/>
            <person name="Meyers C."/>
            <person name="Nakajima M."/>
            <person name="Narusaka M."/>
            <person name="Seki M."/>
            <person name="Sakurai T."/>
            <person name="Satou M."/>
            <person name="Tamse R."/>
            <person name="Vaysberg M."/>
            <person name="Wallender E.K."/>
            <person name="Wong C."/>
            <person name="Yamamura Y."/>
            <person name="Yuan S."/>
            <person name="Shinozaki K."/>
            <person name="Davis R.W."/>
            <person name="Theologis A."/>
            <person name="Ecker J.R."/>
        </authorList>
    </citation>
    <scope>NUCLEOTIDE SEQUENCE [LARGE SCALE MRNA]</scope>
    <source>
        <strain>cv. Columbia</strain>
    </source>
</reference>
<reference key="5">
    <citation type="journal article" date="1997" name="Plant Physiol.">
        <title>bor1-1, an Arabidopsis thaliana mutant that requires a high level of boron.</title>
        <authorList>
            <person name="Noguchi K."/>
            <person name="Yasumori M."/>
            <person name="Imai T."/>
            <person name="Naito S."/>
            <person name="Matsunaga T."/>
            <person name="Oda H."/>
            <person name="Hayashi H."/>
            <person name="Chino M."/>
            <person name="Fujiwara T."/>
        </authorList>
    </citation>
    <scope>FUNCTION</scope>
</reference>
<reference key="6">
    <citation type="journal article" date="2005" name="Proc. Natl. Acad. Sci. U.S.A.">
        <title>Endocytosis and degradation of BOR1, a boron transporter of Arabidopsis thaliana, regulated by boron availability.</title>
        <authorList>
            <person name="Takano J."/>
            <person name="Miwa K."/>
            <person name="Yuan L."/>
            <person name="von Wiren N."/>
            <person name="Fujiwara T."/>
        </authorList>
    </citation>
    <scope>SUBCELLULAR LOCATION</scope>
</reference>
<reference key="7">
    <citation type="journal article" date="2006" name="Plant J.">
        <title>Improvement of seed yields under boron-limiting conditions through overexpression of BOR1, a boron transporter for xylem loading, in Arabidopsis thaliana.</title>
        <authorList>
            <person name="Miwa K."/>
            <person name="Takano J."/>
            <person name="Fujiwara T."/>
        </authorList>
    </citation>
    <scope>FUNCTION</scope>
</reference>
<reference key="8">
    <citation type="journal article" date="2010" name="Proc. Natl. Acad. Sci. U.S.A.">
        <title>Polar localization and degradation of Arabidopsis boron transporters through distinct trafficking pathways.</title>
        <authorList>
            <person name="Takano J."/>
            <person name="Tanaka M."/>
            <person name="Toyoda A."/>
            <person name="Miwa K."/>
            <person name="Kasai K."/>
            <person name="Fuji K."/>
            <person name="Onouchi H."/>
            <person name="Naito S."/>
            <person name="Fujiwara T."/>
        </authorList>
    </citation>
    <scope>TISSUE SPECIFICITY</scope>
    <scope>SUBCELLULAR LOCATION</scope>
    <scope>MUTAGENESIS OF TYR-373; TYR-398 AND TYR-405</scope>
</reference>
<reference key="9">
    <citation type="journal article" date="2016" name="Plant Cell Physiol.">
        <title>DRP1-dependent endocytosis is essential for polar Localization and boron-induced degradation of the borate transporter BOR1 in Arabidopsis thaliana.</title>
        <authorList>
            <person name="Yoshinari A."/>
            <person name="Fujimoto M."/>
            <person name="Ueda T."/>
            <person name="Inada N."/>
            <person name="Naito S."/>
            <person name="Takano J."/>
        </authorList>
    </citation>
    <scope>FUNCTION</scope>
    <scope>TISSUE SPECIFICITY</scope>
    <scope>DEVELOPMENTAL STAGE</scope>
    <scope>SUBCELLULAR LOCATION</scope>
    <source>
        <strain>cv. Columbia</strain>
    </source>
</reference>
<organism>
    <name type="scientific">Arabidopsis thaliana</name>
    <name type="common">Mouse-ear cress</name>
    <dbReference type="NCBI Taxonomy" id="3702"/>
    <lineage>
        <taxon>Eukaryota</taxon>
        <taxon>Viridiplantae</taxon>
        <taxon>Streptophyta</taxon>
        <taxon>Embryophyta</taxon>
        <taxon>Tracheophyta</taxon>
        <taxon>Spermatophyta</taxon>
        <taxon>Magnoliopsida</taxon>
        <taxon>eudicotyledons</taxon>
        <taxon>Gunneridae</taxon>
        <taxon>Pentapetalae</taxon>
        <taxon>rosids</taxon>
        <taxon>malvids</taxon>
        <taxon>Brassicales</taxon>
        <taxon>Brassicaceae</taxon>
        <taxon>Camelineae</taxon>
        <taxon>Arabidopsis</taxon>
    </lineage>
</organism>
<keyword id="KW-0002">3D-structure</keyword>
<keyword id="KW-0025">Alternative splicing</keyword>
<keyword id="KW-0039">Anion exchange</keyword>
<keyword id="KW-1003">Cell membrane</keyword>
<keyword id="KW-0967">Endosome</keyword>
<keyword id="KW-0406">Ion transport</keyword>
<keyword id="KW-0472">Membrane</keyword>
<keyword id="KW-1185">Reference proteome</keyword>
<keyword id="KW-0812">Transmembrane</keyword>
<keyword id="KW-1133">Transmembrane helix</keyword>
<keyword id="KW-0813">Transport</keyword>
<keyword id="KW-0926">Vacuole</keyword>